<evidence type="ECO:0000255" key="1">
    <source>
        <dbReference type="HAMAP-Rule" id="MF_00123"/>
    </source>
</evidence>
<comment type="catalytic activity">
    <reaction evidence="1">
        <text>tRNA(Arg) + L-arginine + ATP = L-arginyl-tRNA(Arg) + AMP + diphosphate</text>
        <dbReference type="Rhea" id="RHEA:20301"/>
        <dbReference type="Rhea" id="RHEA-COMP:9658"/>
        <dbReference type="Rhea" id="RHEA-COMP:9673"/>
        <dbReference type="ChEBI" id="CHEBI:30616"/>
        <dbReference type="ChEBI" id="CHEBI:32682"/>
        <dbReference type="ChEBI" id="CHEBI:33019"/>
        <dbReference type="ChEBI" id="CHEBI:78442"/>
        <dbReference type="ChEBI" id="CHEBI:78513"/>
        <dbReference type="ChEBI" id="CHEBI:456215"/>
        <dbReference type="EC" id="6.1.1.19"/>
    </reaction>
</comment>
<comment type="subunit">
    <text evidence="1">Monomer.</text>
</comment>
<comment type="subcellular location">
    <subcellularLocation>
        <location evidence="1">Cytoplasm</location>
    </subcellularLocation>
</comment>
<comment type="similarity">
    <text evidence="1">Belongs to the class-I aminoacyl-tRNA synthetase family.</text>
</comment>
<accession>Q7NWM1</accession>
<protein>
    <recommendedName>
        <fullName evidence="1">Arginine--tRNA ligase</fullName>
        <ecNumber evidence="1">6.1.1.19</ecNumber>
    </recommendedName>
    <alternativeName>
        <fullName evidence="1">Arginyl-tRNA synthetase</fullName>
        <shortName evidence="1">ArgRS</shortName>
    </alternativeName>
</protein>
<organism>
    <name type="scientific">Chromobacterium violaceum (strain ATCC 12472 / DSM 30191 / JCM 1249 / CCUG 213 / NBRC 12614 / NCIMB 9131 / NCTC 9757 / MK)</name>
    <dbReference type="NCBI Taxonomy" id="243365"/>
    <lineage>
        <taxon>Bacteria</taxon>
        <taxon>Pseudomonadati</taxon>
        <taxon>Pseudomonadota</taxon>
        <taxon>Betaproteobacteria</taxon>
        <taxon>Neisseriales</taxon>
        <taxon>Chromobacteriaceae</taxon>
        <taxon>Chromobacterium</taxon>
    </lineage>
</organism>
<proteinExistence type="inferred from homology"/>
<reference key="1">
    <citation type="journal article" date="2003" name="Proc. Natl. Acad. Sci. U.S.A.">
        <title>The complete genome sequence of Chromobacterium violaceum reveals remarkable and exploitable bacterial adaptability.</title>
        <authorList>
            <person name="Vasconcelos A.T.R."/>
            <person name="de Almeida D.F."/>
            <person name="Hungria M."/>
            <person name="Guimaraes C.T."/>
            <person name="Antonio R.V."/>
            <person name="Almeida F.C."/>
            <person name="de Almeida L.G.P."/>
            <person name="de Almeida R."/>
            <person name="Alves-Gomes J.A."/>
            <person name="Andrade E.M."/>
            <person name="Araripe J."/>
            <person name="de Araujo M.F.F."/>
            <person name="Astolfi-Filho S."/>
            <person name="Azevedo V."/>
            <person name="Baptista A.J."/>
            <person name="Bataus L.A.M."/>
            <person name="Batista J.S."/>
            <person name="Belo A."/>
            <person name="van den Berg C."/>
            <person name="Bogo M."/>
            <person name="Bonatto S."/>
            <person name="Bordignon J."/>
            <person name="Brigido M.M."/>
            <person name="Brito C.A."/>
            <person name="Brocchi M."/>
            <person name="Burity H.A."/>
            <person name="Camargo A.A."/>
            <person name="Cardoso D.D.P."/>
            <person name="Carneiro N.P."/>
            <person name="Carraro D.M."/>
            <person name="Carvalho C.M.B."/>
            <person name="Cascardo J.C.M."/>
            <person name="Cavada B.S."/>
            <person name="Chueire L.M.O."/>
            <person name="Creczynski-Pasa T.B."/>
            <person name="Cunha-Junior N.C."/>
            <person name="Fagundes N."/>
            <person name="Falcao C.L."/>
            <person name="Fantinatti F."/>
            <person name="Farias I.P."/>
            <person name="Felipe M.S.S."/>
            <person name="Ferrari L.P."/>
            <person name="Ferro J.A."/>
            <person name="Ferro M.I.T."/>
            <person name="Franco G.R."/>
            <person name="Freitas N.S.A."/>
            <person name="Furlan L.R."/>
            <person name="Gazzinelli R.T."/>
            <person name="Gomes E.A."/>
            <person name="Goncalves P.R."/>
            <person name="Grangeiro T.B."/>
            <person name="Grattapaglia D."/>
            <person name="Grisard E.C."/>
            <person name="Hanna E.S."/>
            <person name="Jardim S.N."/>
            <person name="Laurino J."/>
            <person name="Leoi L.C.T."/>
            <person name="Lima L.F.A."/>
            <person name="Loureiro M.F."/>
            <person name="Lyra M.C.C.P."/>
            <person name="Madeira H.M.F."/>
            <person name="Manfio G.P."/>
            <person name="Maranhao A.Q."/>
            <person name="Martins W.S."/>
            <person name="di Mauro S.M.Z."/>
            <person name="de Medeiros S.R.B."/>
            <person name="Meissner R.V."/>
            <person name="Moreira M.A.M."/>
            <person name="Nascimento F.F."/>
            <person name="Nicolas M.F."/>
            <person name="Oliveira J.G."/>
            <person name="Oliveira S.C."/>
            <person name="Paixao R.F.C."/>
            <person name="Parente J.A."/>
            <person name="Pedrosa F.O."/>
            <person name="Pena S.D.J."/>
            <person name="Pereira J.O."/>
            <person name="Pereira M."/>
            <person name="Pinto L.S.R.C."/>
            <person name="Pinto L.S."/>
            <person name="Porto J.I.R."/>
            <person name="Potrich D.P."/>
            <person name="Ramalho-Neto C.E."/>
            <person name="Reis A.M.M."/>
            <person name="Rigo L.U."/>
            <person name="Rondinelli E."/>
            <person name="Santos E.B.P."/>
            <person name="Santos F.R."/>
            <person name="Schneider M.P.C."/>
            <person name="Seuanez H.N."/>
            <person name="Silva A.M.R."/>
            <person name="da Silva A.L.C."/>
            <person name="Silva D.W."/>
            <person name="Silva R."/>
            <person name="Simoes I.C."/>
            <person name="Simon D."/>
            <person name="Soares C.M.A."/>
            <person name="Soares R.B.A."/>
            <person name="Souza E.M."/>
            <person name="Souza K.R.L."/>
            <person name="Souza R.C."/>
            <person name="Steffens M.B.R."/>
            <person name="Steindel M."/>
            <person name="Teixeira S.R."/>
            <person name="Urmenyi T."/>
            <person name="Vettore A."/>
            <person name="Wassem R."/>
            <person name="Zaha A."/>
            <person name="Simpson A.J.G."/>
        </authorList>
    </citation>
    <scope>NUCLEOTIDE SEQUENCE [LARGE SCALE GENOMIC DNA]</scope>
    <source>
        <strain>ATCC 12472 / DSM 30191 / JCM 1249 / CCUG 213 / NBRC 12614 / NCIMB 9131 / NCTC 9757 / MK</strain>
    </source>
</reference>
<sequence length="572" mass="63582">MTIHQLINERVQAALAAAGAPDAPAVVQPASKPEFGDYQANGVMGAAKALKTNPRALAEKVVAALDLAGIADKVEIAGPGFINIHLAPEYLARRSEAALKDDKLGIAPVKPLRVMVEYSSPNLAKEMHVGHLRSSIIGDALARVMEYVGHDVVRANHVGDWGTQFGMLVAYLVETRHAGDADLQLSDLETFYRNAKIRFDESEDFANTARDYVVKLQGGDEEVLKLWRQFVDVSLKHCEDVYEKLNVGLKREHVRGESSYNDDLPVIVQELREKGLLTEDDGAQVVFLDEFRTQEDKPMGVIVQKKDGGFIYTTTDIGAVRYRHRELKLDRVIYVVDARQSQHFAQMFTICRKAGFAPEAMKLEHVGFGVMMGDDGKPFKTRSGGTVKLIELLNEAEERAYALVSEKNPDLSDAQKREIANAVGIGAVKYADLSKNRMSDYIFNWDTMLAFEGNTAPYLQYAYTRVQSVFRKAEDYDANARIVITEPAEKQLAAALAQFEDTLNSVVEGCYPHYLSLYLYQIATLFSRFYEACPILKSEGEVRASRLQLAALTAKTLRTGLDLLGIKVLESM</sequence>
<name>SYR_CHRVO</name>
<keyword id="KW-0030">Aminoacyl-tRNA synthetase</keyword>
<keyword id="KW-0067">ATP-binding</keyword>
<keyword id="KW-0963">Cytoplasm</keyword>
<keyword id="KW-0436">Ligase</keyword>
<keyword id="KW-0547">Nucleotide-binding</keyword>
<keyword id="KW-0648">Protein biosynthesis</keyword>
<keyword id="KW-1185">Reference proteome</keyword>
<dbReference type="EC" id="6.1.1.19" evidence="1"/>
<dbReference type="EMBL" id="AE016825">
    <property type="protein sequence ID" value="AAQ59634.1"/>
    <property type="molecule type" value="Genomic_DNA"/>
</dbReference>
<dbReference type="RefSeq" id="WP_011135513.1">
    <property type="nucleotide sequence ID" value="NC_005085.1"/>
</dbReference>
<dbReference type="SMR" id="Q7NWM1"/>
<dbReference type="STRING" id="243365.CV_1962"/>
<dbReference type="GeneID" id="66367626"/>
<dbReference type="KEGG" id="cvi:CV_1962"/>
<dbReference type="eggNOG" id="COG0018">
    <property type="taxonomic scope" value="Bacteria"/>
</dbReference>
<dbReference type="HOGENOM" id="CLU_006406_5_1_4"/>
<dbReference type="OrthoDB" id="9803211at2"/>
<dbReference type="Proteomes" id="UP000001424">
    <property type="component" value="Chromosome"/>
</dbReference>
<dbReference type="GO" id="GO:0005737">
    <property type="term" value="C:cytoplasm"/>
    <property type="evidence" value="ECO:0007669"/>
    <property type="project" value="UniProtKB-SubCell"/>
</dbReference>
<dbReference type="GO" id="GO:0004814">
    <property type="term" value="F:arginine-tRNA ligase activity"/>
    <property type="evidence" value="ECO:0007669"/>
    <property type="project" value="UniProtKB-UniRule"/>
</dbReference>
<dbReference type="GO" id="GO:0005524">
    <property type="term" value="F:ATP binding"/>
    <property type="evidence" value="ECO:0007669"/>
    <property type="project" value="UniProtKB-UniRule"/>
</dbReference>
<dbReference type="GO" id="GO:0006420">
    <property type="term" value="P:arginyl-tRNA aminoacylation"/>
    <property type="evidence" value="ECO:0007669"/>
    <property type="project" value="UniProtKB-UniRule"/>
</dbReference>
<dbReference type="CDD" id="cd07956">
    <property type="entry name" value="Anticodon_Ia_Arg"/>
    <property type="match status" value="1"/>
</dbReference>
<dbReference type="CDD" id="cd00671">
    <property type="entry name" value="ArgRS_core"/>
    <property type="match status" value="1"/>
</dbReference>
<dbReference type="FunFam" id="3.40.50.620:FF:000030">
    <property type="entry name" value="Arginine--tRNA ligase"/>
    <property type="match status" value="1"/>
</dbReference>
<dbReference type="FunFam" id="1.10.730.10:FF:000006">
    <property type="entry name" value="Arginyl-tRNA synthetase 2, mitochondrial"/>
    <property type="match status" value="1"/>
</dbReference>
<dbReference type="Gene3D" id="3.30.1360.70">
    <property type="entry name" value="Arginyl tRNA synthetase N-terminal domain"/>
    <property type="match status" value="1"/>
</dbReference>
<dbReference type="Gene3D" id="3.40.50.620">
    <property type="entry name" value="HUPs"/>
    <property type="match status" value="1"/>
</dbReference>
<dbReference type="Gene3D" id="1.10.730.10">
    <property type="entry name" value="Isoleucyl-tRNA Synthetase, Domain 1"/>
    <property type="match status" value="1"/>
</dbReference>
<dbReference type="HAMAP" id="MF_00123">
    <property type="entry name" value="Arg_tRNA_synth"/>
    <property type="match status" value="1"/>
</dbReference>
<dbReference type="InterPro" id="IPR001412">
    <property type="entry name" value="aa-tRNA-synth_I_CS"/>
</dbReference>
<dbReference type="InterPro" id="IPR001278">
    <property type="entry name" value="Arg-tRNA-ligase"/>
</dbReference>
<dbReference type="InterPro" id="IPR005148">
    <property type="entry name" value="Arg-tRNA-synth_N"/>
</dbReference>
<dbReference type="InterPro" id="IPR036695">
    <property type="entry name" value="Arg-tRNA-synth_N_sf"/>
</dbReference>
<dbReference type="InterPro" id="IPR035684">
    <property type="entry name" value="ArgRS_core"/>
</dbReference>
<dbReference type="InterPro" id="IPR008909">
    <property type="entry name" value="DALR_anticod-bd"/>
</dbReference>
<dbReference type="InterPro" id="IPR014729">
    <property type="entry name" value="Rossmann-like_a/b/a_fold"/>
</dbReference>
<dbReference type="InterPro" id="IPR009080">
    <property type="entry name" value="tRNAsynth_Ia_anticodon-bd"/>
</dbReference>
<dbReference type="NCBIfam" id="TIGR00456">
    <property type="entry name" value="argS"/>
    <property type="match status" value="1"/>
</dbReference>
<dbReference type="PANTHER" id="PTHR11956:SF5">
    <property type="entry name" value="ARGININE--TRNA LIGASE, CYTOPLASMIC"/>
    <property type="match status" value="1"/>
</dbReference>
<dbReference type="PANTHER" id="PTHR11956">
    <property type="entry name" value="ARGINYL-TRNA SYNTHETASE"/>
    <property type="match status" value="1"/>
</dbReference>
<dbReference type="Pfam" id="PF03485">
    <property type="entry name" value="Arg_tRNA_synt_N"/>
    <property type="match status" value="1"/>
</dbReference>
<dbReference type="Pfam" id="PF05746">
    <property type="entry name" value="DALR_1"/>
    <property type="match status" value="1"/>
</dbReference>
<dbReference type="Pfam" id="PF00750">
    <property type="entry name" value="tRNA-synt_1d"/>
    <property type="match status" value="1"/>
</dbReference>
<dbReference type="PRINTS" id="PR01038">
    <property type="entry name" value="TRNASYNTHARG"/>
</dbReference>
<dbReference type="SMART" id="SM01016">
    <property type="entry name" value="Arg_tRNA_synt_N"/>
    <property type="match status" value="1"/>
</dbReference>
<dbReference type="SMART" id="SM00836">
    <property type="entry name" value="DALR_1"/>
    <property type="match status" value="1"/>
</dbReference>
<dbReference type="SUPFAM" id="SSF47323">
    <property type="entry name" value="Anticodon-binding domain of a subclass of class I aminoacyl-tRNA synthetases"/>
    <property type="match status" value="1"/>
</dbReference>
<dbReference type="SUPFAM" id="SSF55190">
    <property type="entry name" value="Arginyl-tRNA synthetase (ArgRS), N-terminal 'additional' domain"/>
    <property type="match status" value="1"/>
</dbReference>
<dbReference type="SUPFAM" id="SSF52374">
    <property type="entry name" value="Nucleotidylyl transferase"/>
    <property type="match status" value="1"/>
</dbReference>
<dbReference type="PROSITE" id="PS00178">
    <property type="entry name" value="AA_TRNA_LIGASE_I"/>
    <property type="match status" value="1"/>
</dbReference>
<gene>
    <name evidence="1" type="primary">argS</name>
    <name type="ordered locus">CV_1962</name>
</gene>
<feature type="chain" id="PRO_0000151549" description="Arginine--tRNA ligase">
    <location>
        <begin position="1"/>
        <end position="572"/>
    </location>
</feature>
<feature type="short sequence motif" description="'HIGH' region">
    <location>
        <begin position="121"/>
        <end position="131"/>
    </location>
</feature>